<protein>
    <recommendedName>
        <fullName>CD209 antigen</fullName>
    </recommendedName>
    <alternativeName>
        <fullName>Dendritic cell-specific ICAM-3-grabbing non-integrin 1</fullName>
        <shortName>DC-SIGN1</shortName>
    </alternativeName>
    <cdAntigenName>CD209</cdAntigenName>
</protein>
<keyword id="KW-1064">Adaptive immunity</keyword>
<keyword id="KW-0106">Calcium</keyword>
<keyword id="KW-0130">Cell adhesion</keyword>
<keyword id="KW-1015">Disulfide bond</keyword>
<keyword id="KW-0254">Endocytosis</keyword>
<keyword id="KW-0325">Glycoprotein</keyword>
<keyword id="KW-0391">Immunity</keyword>
<keyword id="KW-0399">Innate immunity</keyword>
<keyword id="KW-0430">Lectin</keyword>
<keyword id="KW-0465">Mannose-binding</keyword>
<keyword id="KW-0472">Membrane</keyword>
<keyword id="KW-0479">Metal-binding</keyword>
<keyword id="KW-0675">Receptor</keyword>
<keyword id="KW-0677">Repeat</keyword>
<keyword id="KW-0735">Signal-anchor</keyword>
<keyword id="KW-0812">Transmembrane</keyword>
<keyword id="KW-1133">Transmembrane helix</keyword>
<feature type="chain" id="PRO_0000046598" description="CD209 antigen">
    <location>
        <begin position="1"/>
        <end position="381"/>
    </location>
</feature>
<feature type="topological domain" description="Cytoplasmic" evidence="3">
    <location>
        <begin position="1"/>
        <end position="37"/>
    </location>
</feature>
<feature type="transmembrane region" description="Helical; Signal-anchor for type II membrane protein" evidence="3">
    <location>
        <begin position="38"/>
        <end position="58"/>
    </location>
</feature>
<feature type="topological domain" description="Extracellular" evidence="3">
    <location>
        <begin position="59"/>
        <end position="381"/>
    </location>
</feature>
<feature type="repeat" description="1">
    <location>
        <begin position="96"/>
        <end position="118"/>
    </location>
</feature>
<feature type="repeat" description="2">
    <location>
        <begin position="119"/>
        <end position="141"/>
    </location>
</feature>
<feature type="repeat" description="3">
    <location>
        <begin position="142"/>
        <end position="164"/>
    </location>
</feature>
<feature type="repeat" description="4">
    <location>
        <begin position="165"/>
        <end position="187"/>
    </location>
</feature>
<feature type="repeat" description="5">
    <location>
        <begin position="188"/>
        <end position="210"/>
    </location>
</feature>
<feature type="repeat" description="6">
    <location>
        <begin position="211"/>
        <end position="234"/>
    </location>
</feature>
<feature type="domain" description="C-type lectin" evidence="4">
    <location>
        <begin position="240"/>
        <end position="355"/>
    </location>
</feature>
<feature type="region of interest" description="6 X approximate tandem repeats">
    <location>
        <begin position="96"/>
        <end position="303"/>
    </location>
</feature>
<feature type="short sequence motif" description="Endocytosis signal" evidence="1">
    <location>
        <begin position="14"/>
        <end position="15"/>
    </location>
</feature>
<feature type="short sequence motif" description="Endocytosis signal" evidence="3">
    <location>
        <begin position="16"/>
        <end position="18"/>
    </location>
</feature>
<feature type="short sequence motif" description="Endocytosis signal" evidence="3">
    <location>
        <begin position="31"/>
        <end position="34"/>
    </location>
</feature>
<feature type="binding site" evidence="1">
    <location>
        <position position="324"/>
    </location>
    <ligand>
        <name>Ca(2+)</name>
        <dbReference type="ChEBI" id="CHEBI:29108"/>
    </ligand>
</feature>
<feature type="binding site" evidence="1">
    <location>
        <position position="326"/>
    </location>
    <ligand>
        <name>Ca(2+)</name>
        <dbReference type="ChEBI" id="CHEBI:29108"/>
    </ligand>
</feature>
<feature type="binding site" evidence="1">
    <location>
        <position position="328"/>
    </location>
    <ligand>
        <name>Ca(2+)</name>
        <dbReference type="ChEBI" id="CHEBI:29108"/>
    </ligand>
</feature>
<feature type="binding site" evidence="1">
    <location>
        <position position="331"/>
    </location>
    <ligand>
        <name>Ca(2+)</name>
        <dbReference type="ChEBI" id="CHEBI:29108"/>
    </ligand>
</feature>
<feature type="binding site" evidence="1">
    <location>
        <position position="342"/>
    </location>
    <ligand>
        <name>Ca(2+)</name>
        <dbReference type="ChEBI" id="CHEBI:29108"/>
    </ligand>
</feature>
<feature type="binding site" evidence="1">
    <location>
        <position position="343"/>
    </location>
    <ligand>
        <name>Ca(2+)</name>
        <dbReference type="ChEBI" id="CHEBI:29108"/>
    </ligand>
</feature>
<feature type="glycosylation site" description="N-linked (GlcNAc...) asparagine" evidence="3">
    <location>
        <position position="80"/>
    </location>
</feature>
<feature type="disulfide bond" evidence="4">
    <location>
        <begin position="233"/>
        <end position="244"/>
    </location>
</feature>
<feature type="disulfide bond" evidence="4">
    <location>
        <begin position="261"/>
        <end position="354"/>
    </location>
</feature>
<feature type="disulfide bond" evidence="4">
    <location>
        <begin position="333"/>
        <end position="346"/>
    </location>
</feature>
<dbReference type="EMBL" id="AY078884">
    <property type="protein sequence ID" value="AAL89539.1"/>
    <property type="molecule type" value="Genomic_DNA"/>
</dbReference>
<dbReference type="EMBL" id="AY078878">
    <property type="protein sequence ID" value="AAL89539.1"/>
    <property type="status" value="JOINED"/>
    <property type="molecule type" value="Genomic_DNA"/>
</dbReference>
<dbReference type="EMBL" id="AY078879">
    <property type="protein sequence ID" value="AAL89539.1"/>
    <property type="status" value="JOINED"/>
    <property type="molecule type" value="Genomic_DNA"/>
</dbReference>
<dbReference type="EMBL" id="AY078880">
    <property type="protein sequence ID" value="AAL89539.1"/>
    <property type="status" value="JOINED"/>
    <property type="molecule type" value="Genomic_DNA"/>
</dbReference>
<dbReference type="EMBL" id="AY078881">
    <property type="protein sequence ID" value="AAL89539.1"/>
    <property type="status" value="JOINED"/>
    <property type="molecule type" value="Genomic_DNA"/>
</dbReference>
<dbReference type="EMBL" id="AY078882">
    <property type="protein sequence ID" value="AAL89539.1"/>
    <property type="status" value="JOINED"/>
    <property type="molecule type" value="Genomic_DNA"/>
</dbReference>
<dbReference type="EMBL" id="AY078883">
    <property type="protein sequence ID" value="AAL89539.1"/>
    <property type="status" value="JOINED"/>
    <property type="molecule type" value="Genomic_DNA"/>
</dbReference>
<dbReference type="GlyCosmos" id="Q8HY02">
    <property type="glycosylation" value="1 site, No reported glycans"/>
</dbReference>
<dbReference type="GO" id="GO:0016020">
    <property type="term" value="C:membrane"/>
    <property type="evidence" value="ECO:0007669"/>
    <property type="project" value="UniProtKB-SubCell"/>
</dbReference>
<dbReference type="GO" id="GO:0005537">
    <property type="term" value="F:D-mannose binding"/>
    <property type="evidence" value="ECO:0007669"/>
    <property type="project" value="UniProtKB-KW"/>
</dbReference>
<dbReference type="GO" id="GO:0046872">
    <property type="term" value="F:metal ion binding"/>
    <property type="evidence" value="ECO:0007669"/>
    <property type="project" value="UniProtKB-KW"/>
</dbReference>
<dbReference type="GO" id="GO:0002250">
    <property type="term" value="P:adaptive immune response"/>
    <property type="evidence" value="ECO:0007669"/>
    <property type="project" value="UniProtKB-KW"/>
</dbReference>
<dbReference type="GO" id="GO:0007155">
    <property type="term" value="P:cell adhesion"/>
    <property type="evidence" value="ECO:0007669"/>
    <property type="project" value="UniProtKB-KW"/>
</dbReference>
<dbReference type="GO" id="GO:0006897">
    <property type="term" value="P:endocytosis"/>
    <property type="evidence" value="ECO:0007669"/>
    <property type="project" value="UniProtKB-KW"/>
</dbReference>
<dbReference type="GO" id="GO:0045087">
    <property type="term" value="P:innate immune response"/>
    <property type="evidence" value="ECO:0007669"/>
    <property type="project" value="UniProtKB-KW"/>
</dbReference>
<dbReference type="CDD" id="cd03590">
    <property type="entry name" value="CLECT_DC-SIGN_like"/>
    <property type="match status" value="1"/>
</dbReference>
<dbReference type="FunFam" id="3.10.100.10:FF:000044">
    <property type="entry name" value="CD209 antigen, isoform CRA_b"/>
    <property type="match status" value="1"/>
</dbReference>
<dbReference type="Gene3D" id="3.10.100.10">
    <property type="entry name" value="Mannose-Binding Protein A, subunit A"/>
    <property type="match status" value="1"/>
</dbReference>
<dbReference type="InterPro" id="IPR001304">
    <property type="entry name" value="C-type_lectin-like"/>
</dbReference>
<dbReference type="InterPro" id="IPR016186">
    <property type="entry name" value="C-type_lectin-like/link_sf"/>
</dbReference>
<dbReference type="InterPro" id="IPR050111">
    <property type="entry name" value="C-type_lectin/snaclec_domain"/>
</dbReference>
<dbReference type="InterPro" id="IPR018378">
    <property type="entry name" value="C-type_lectin_CS"/>
</dbReference>
<dbReference type="InterPro" id="IPR033989">
    <property type="entry name" value="CD209-like_CTLD"/>
</dbReference>
<dbReference type="InterPro" id="IPR016187">
    <property type="entry name" value="CTDL_fold"/>
</dbReference>
<dbReference type="PANTHER" id="PTHR22803">
    <property type="entry name" value="MANNOSE, PHOSPHOLIPASE, LECTIN RECEPTOR RELATED"/>
    <property type="match status" value="1"/>
</dbReference>
<dbReference type="Pfam" id="PF00059">
    <property type="entry name" value="Lectin_C"/>
    <property type="match status" value="1"/>
</dbReference>
<dbReference type="SMART" id="SM00034">
    <property type="entry name" value="CLECT"/>
    <property type="match status" value="1"/>
</dbReference>
<dbReference type="SUPFAM" id="SSF56436">
    <property type="entry name" value="C-type lectin-like"/>
    <property type="match status" value="1"/>
</dbReference>
<dbReference type="PROSITE" id="PS00615">
    <property type="entry name" value="C_TYPE_LECTIN_1"/>
    <property type="match status" value="1"/>
</dbReference>
<dbReference type="PROSITE" id="PS50041">
    <property type="entry name" value="C_TYPE_LECTIN_2"/>
    <property type="match status" value="1"/>
</dbReference>
<evidence type="ECO:0000250" key="1"/>
<evidence type="ECO:0000250" key="2">
    <source>
        <dbReference type="UniProtKB" id="Q9NNX6"/>
    </source>
</evidence>
<evidence type="ECO:0000255" key="3"/>
<evidence type="ECO:0000255" key="4">
    <source>
        <dbReference type="PROSITE-ProRule" id="PRU00040"/>
    </source>
</evidence>
<gene>
    <name type="primary">CD209</name>
</gene>
<accession>Q8HY02</accession>
<name>CD209_SYMSY</name>
<reference key="1">
    <citation type="journal article" date="2003" name="J. Virol.">
        <title>Novel member of the CD209 (DC-SIGN) gene family in primates.</title>
        <authorList>
            <person name="Bashirova A.A."/>
            <person name="Wu L."/>
            <person name="Cheng J."/>
            <person name="Martin T.D."/>
            <person name="Martin M.P."/>
            <person name="Benveniste R.E."/>
            <person name="Lifson J.D."/>
            <person name="Kewalramani V.N."/>
            <person name="Hughes A."/>
            <person name="Carrington M."/>
        </authorList>
    </citation>
    <scope>NUCLEOTIDE SEQUENCE [GENOMIC DNA]</scope>
    <source>
        <strain>Isolate B1533</strain>
    </source>
</reference>
<organism>
    <name type="scientific">Symphalangus syndactylus</name>
    <name type="common">Siamang</name>
    <name type="synonym">Hylobates syndactylus</name>
    <dbReference type="NCBI Taxonomy" id="9590"/>
    <lineage>
        <taxon>Eukaryota</taxon>
        <taxon>Metazoa</taxon>
        <taxon>Chordata</taxon>
        <taxon>Craniata</taxon>
        <taxon>Vertebrata</taxon>
        <taxon>Euteleostomi</taxon>
        <taxon>Mammalia</taxon>
        <taxon>Eutheria</taxon>
        <taxon>Euarchontoglires</taxon>
        <taxon>Primates</taxon>
        <taxon>Haplorrhini</taxon>
        <taxon>Catarrhini</taxon>
        <taxon>Hylobatidae</taxon>
        <taxon>Symphalangus</taxon>
    </lineage>
</organism>
<sequence>MSDSKEPSVQQLGLLEEEQLRGLGFRQTRGYKSLAGCLGHGXLVLQLLSFTXLAGLLIQVSKFPSSISQEQSKQDAIYQNLTQLKAAVGELSEKSKLQEIYQELTRLKAAVGELPEKSQQQEIYQELTRLKAAVGELPEKSTQQEIYQELTRLKATIGELPEQSKLQEIHQELTQLKAAVGELPEKSKQQEIYQELTQLKAAVGELPEKSKQQEIYXELTRLKAAVERLCRPCPWEWTFFQGNCYFMSNSQRDWQDSVTACQEVGAQLVVIKSAEEQNFLQLQSSRSNRFAWMGLSDVNQEGTWQWVDGSPLSPSFKHYWNRGEPNNIGEEDCAEFSGNGWNDDKCNHAKFWICKMSAASCSRDEEQFLSPAPATPNPPPA</sequence>
<comment type="function">
    <text evidence="1">Pathogen-recognition receptor expressed on the surface of immature dendritic cells (DCs) and involved in initiation of primary immune response. Thought to mediate the endocytosis of pathogens which are subsequently degraded in lysosomal compartments. The receptor returns to the cell membrane surface and the pathogen-derived antigens are presented to resting T-cells via MHC class II proteins to initiate the adaptive immune response. Probably recognizes in a calcium-dependent manner high mannose N-linked oligosaccharides in a variety of pathogen antigens (By similarity).</text>
</comment>
<comment type="function">
    <text evidence="1">On DCs it is a high affinity receptor for ICAM2 and ICAM3 by binding to mannose-like carbohydrates. May act as a DC rolling receptor that mediates transendothelial migration of DC presursors from blood to tissues by binding endothelial ICAM2. Seems to regulate DC-induced T-cell proliferation by binding to ICAM3 on T-cells in the immunological synapse formed between DC and T-cells (By similarity).</text>
</comment>
<comment type="subunit">
    <text evidence="2">Homotetramer. Interacts with C1QBP; the interaction is indicative for a C1q:C1QBP:CD209 signaling complex. Interacts with ICAM2 and ICAM3 by binding to mannose-like carbohydrates. Interacts (via C-type lectin domain) with CEACAM1 (via Lewis X moieties); this interaction is regulated by the glycosylation pattern of CEACAM1 on cell types and regulates contact between dendritic cells and neutrophils.</text>
</comment>
<comment type="subcellular location">
    <subcellularLocation>
        <location evidence="1">Membrane</location>
        <topology evidence="1">Single-pass type II membrane protein</topology>
    </subcellularLocation>
</comment>
<comment type="domain">
    <text evidence="1">The tandem repeat domain, also called neck domain, mediates oligomerization.</text>
</comment>
<proteinExistence type="inferred from homology"/>